<gene>
    <name evidence="1" type="primary">purH</name>
    <name type="ordered locus">KPN78578_43230</name>
    <name type="ORF">KPN_04388</name>
</gene>
<dbReference type="EC" id="2.1.2.3" evidence="1"/>
<dbReference type="EC" id="3.5.4.10" evidence="1"/>
<dbReference type="EMBL" id="CP000647">
    <property type="protein sequence ID" value="ABR79747.1"/>
    <property type="molecule type" value="Genomic_DNA"/>
</dbReference>
<dbReference type="RefSeq" id="WP_015959244.1">
    <property type="nucleotide sequence ID" value="NC_009648.1"/>
</dbReference>
<dbReference type="SMR" id="A6TGR3"/>
<dbReference type="STRING" id="272620.KPN_04388"/>
<dbReference type="PaxDb" id="272620-KPN_04388"/>
<dbReference type="EnsemblBacteria" id="ABR79747">
    <property type="protein sequence ID" value="ABR79747"/>
    <property type="gene ID" value="KPN_04388"/>
</dbReference>
<dbReference type="KEGG" id="kpn:KPN_04388"/>
<dbReference type="HOGENOM" id="CLU_016316_5_2_6"/>
<dbReference type="UniPathway" id="UPA00074">
    <property type="reaction ID" value="UER00133"/>
</dbReference>
<dbReference type="UniPathway" id="UPA00074">
    <property type="reaction ID" value="UER00135"/>
</dbReference>
<dbReference type="Proteomes" id="UP000000265">
    <property type="component" value="Chromosome"/>
</dbReference>
<dbReference type="GO" id="GO:0005829">
    <property type="term" value="C:cytosol"/>
    <property type="evidence" value="ECO:0007669"/>
    <property type="project" value="TreeGrafter"/>
</dbReference>
<dbReference type="GO" id="GO:0003937">
    <property type="term" value="F:IMP cyclohydrolase activity"/>
    <property type="evidence" value="ECO:0007669"/>
    <property type="project" value="UniProtKB-UniRule"/>
</dbReference>
<dbReference type="GO" id="GO:0004643">
    <property type="term" value="F:phosphoribosylaminoimidazolecarboxamide formyltransferase activity"/>
    <property type="evidence" value="ECO:0007669"/>
    <property type="project" value="UniProtKB-UniRule"/>
</dbReference>
<dbReference type="GO" id="GO:0006189">
    <property type="term" value="P:'de novo' IMP biosynthetic process"/>
    <property type="evidence" value="ECO:0007669"/>
    <property type="project" value="UniProtKB-UniRule"/>
</dbReference>
<dbReference type="CDD" id="cd01421">
    <property type="entry name" value="IMPCH"/>
    <property type="match status" value="1"/>
</dbReference>
<dbReference type="FunFam" id="3.40.140.20:FF:000001">
    <property type="entry name" value="Bifunctional purine biosynthesis protein PurH"/>
    <property type="match status" value="1"/>
</dbReference>
<dbReference type="FunFam" id="3.40.140.20:FF:000002">
    <property type="entry name" value="Bifunctional purine biosynthesis protein PurH"/>
    <property type="match status" value="1"/>
</dbReference>
<dbReference type="FunFam" id="3.40.50.1380:FF:000001">
    <property type="entry name" value="Bifunctional purine biosynthesis protein PurH"/>
    <property type="match status" value="1"/>
</dbReference>
<dbReference type="Gene3D" id="3.40.140.20">
    <property type="match status" value="2"/>
</dbReference>
<dbReference type="Gene3D" id="3.40.50.1380">
    <property type="entry name" value="Methylglyoxal synthase-like domain"/>
    <property type="match status" value="1"/>
</dbReference>
<dbReference type="HAMAP" id="MF_00139">
    <property type="entry name" value="PurH"/>
    <property type="match status" value="1"/>
</dbReference>
<dbReference type="InterPro" id="IPR024051">
    <property type="entry name" value="AICAR_Tfase_dup_dom_sf"/>
</dbReference>
<dbReference type="InterPro" id="IPR016193">
    <property type="entry name" value="Cytidine_deaminase-like"/>
</dbReference>
<dbReference type="InterPro" id="IPR011607">
    <property type="entry name" value="MGS-like_dom"/>
</dbReference>
<dbReference type="InterPro" id="IPR036914">
    <property type="entry name" value="MGS-like_dom_sf"/>
</dbReference>
<dbReference type="InterPro" id="IPR002695">
    <property type="entry name" value="PurH-like"/>
</dbReference>
<dbReference type="NCBIfam" id="NF002049">
    <property type="entry name" value="PRK00881.1"/>
    <property type="match status" value="1"/>
</dbReference>
<dbReference type="NCBIfam" id="TIGR00355">
    <property type="entry name" value="purH"/>
    <property type="match status" value="1"/>
</dbReference>
<dbReference type="PANTHER" id="PTHR11692:SF0">
    <property type="entry name" value="BIFUNCTIONAL PURINE BIOSYNTHESIS PROTEIN ATIC"/>
    <property type="match status" value="1"/>
</dbReference>
<dbReference type="PANTHER" id="PTHR11692">
    <property type="entry name" value="BIFUNCTIONAL PURINE BIOSYNTHESIS PROTEIN PURH"/>
    <property type="match status" value="1"/>
</dbReference>
<dbReference type="Pfam" id="PF01808">
    <property type="entry name" value="AICARFT_IMPCHas"/>
    <property type="match status" value="1"/>
</dbReference>
<dbReference type="Pfam" id="PF02142">
    <property type="entry name" value="MGS"/>
    <property type="match status" value="1"/>
</dbReference>
<dbReference type="PIRSF" id="PIRSF000414">
    <property type="entry name" value="AICARFT_IMPCHas"/>
    <property type="match status" value="1"/>
</dbReference>
<dbReference type="SMART" id="SM00798">
    <property type="entry name" value="AICARFT_IMPCHas"/>
    <property type="match status" value="1"/>
</dbReference>
<dbReference type="SMART" id="SM00851">
    <property type="entry name" value="MGS"/>
    <property type="match status" value="1"/>
</dbReference>
<dbReference type="SUPFAM" id="SSF53927">
    <property type="entry name" value="Cytidine deaminase-like"/>
    <property type="match status" value="1"/>
</dbReference>
<dbReference type="SUPFAM" id="SSF52335">
    <property type="entry name" value="Methylglyoxal synthase-like"/>
    <property type="match status" value="1"/>
</dbReference>
<dbReference type="PROSITE" id="PS51855">
    <property type="entry name" value="MGS"/>
    <property type="match status" value="1"/>
</dbReference>
<feature type="chain" id="PRO_1000018895" description="Bifunctional purine biosynthesis protein PurH">
    <location>
        <begin position="1"/>
        <end position="529"/>
    </location>
</feature>
<feature type="domain" description="MGS-like" evidence="2">
    <location>
        <begin position="1"/>
        <end position="148"/>
    </location>
</feature>
<sequence>MQQRRPVRRALLSVSDKAGIVEFAQALSARGVELLSTGGTARLLADKGLPVTEVSDYTGFPEMMDGRVKTLHPKVHGGILGRRGQDDGIMQQHGIAPIDMVVVNLYPFAQTVAREGCSLEDAVENIDIGGPTMVRSAAKNHKDVAIVVKSSDYDAIINEMDANEGSLTLVTRFDLAIKAFEHTAAYDSMIANYFGSMVPAYHGESKEAAGRFPRTLNLNFIKKQDMRYGENSHQQAAFYIEENVKEASVATATQLQGKALSYNNIADTDAALECVKEFNEPACVIVKHANPCGVAVSNSILDAYDRAYKTDPTSAFGGIIAFNRELDAETAQAIISRQFVEVIIAPSASEEALKITAAKQNVRVLTCGQWDTRVAGLDFKRVNGGLLVQDRDLGMVTAGELRVVSKRQPTEQELRDALFCWKVAKFVKSNAIVYAKDNMTIGIGAGQMSRVYSAKIAGIKAGDEGLEVKGSAMASDAFFPFRDGIDAAAAVGITCVIQPGGSIRDDEVIAAADEHGIAMIFTDMRHFRH</sequence>
<reference key="1">
    <citation type="submission" date="2006-09" db="EMBL/GenBank/DDBJ databases">
        <authorList>
            <consortium name="The Klebsiella pneumonia Genome Sequencing Project"/>
            <person name="McClelland M."/>
            <person name="Sanderson E.K."/>
            <person name="Spieth J."/>
            <person name="Clifton W.S."/>
            <person name="Latreille P."/>
            <person name="Sabo A."/>
            <person name="Pepin K."/>
            <person name="Bhonagiri V."/>
            <person name="Porwollik S."/>
            <person name="Ali J."/>
            <person name="Wilson R.K."/>
        </authorList>
    </citation>
    <scope>NUCLEOTIDE SEQUENCE [LARGE SCALE GENOMIC DNA]</scope>
    <source>
        <strain>ATCC 700721 / MGH 78578</strain>
    </source>
</reference>
<proteinExistence type="inferred from homology"/>
<keyword id="KW-0378">Hydrolase</keyword>
<keyword id="KW-0511">Multifunctional enzyme</keyword>
<keyword id="KW-0658">Purine biosynthesis</keyword>
<keyword id="KW-0808">Transferase</keyword>
<organism>
    <name type="scientific">Klebsiella pneumoniae subsp. pneumoniae (strain ATCC 700721 / MGH 78578)</name>
    <dbReference type="NCBI Taxonomy" id="272620"/>
    <lineage>
        <taxon>Bacteria</taxon>
        <taxon>Pseudomonadati</taxon>
        <taxon>Pseudomonadota</taxon>
        <taxon>Gammaproteobacteria</taxon>
        <taxon>Enterobacterales</taxon>
        <taxon>Enterobacteriaceae</taxon>
        <taxon>Klebsiella/Raoultella group</taxon>
        <taxon>Klebsiella</taxon>
        <taxon>Klebsiella pneumoniae complex</taxon>
    </lineage>
</organism>
<name>PUR9_KLEP7</name>
<accession>A6TGR3</accession>
<protein>
    <recommendedName>
        <fullName evidence="1">Bifunctional purine biosynthesis protein PurH</fullName>
    </recommendedName>
    <domain>
        <recommendedName>
            <fullName evidence="1">Phosphoribosylaminoimidazolecarboxamide formyltransferase</fullName>
            <ecNumber evidence="1">2.1.2.3</ecNumber>
        </recommendedName>
        <alternativeName>
            <fullName evidence="1">AICAR transformylase</fullName>
        </alternativeName>
    </domain>
    <domain>
        <recommendedName>
            <fullName evidence="1">IMP cyclohydrolase</fullName>
            <ecNumber evidence="1">3.5.4.10</ecNumber>
        </recommendedName>
        <alternativeName>
            <fullName evidence="1">ATIC</fullName>
        </alternativeName>
        <alternativeName>
            <fullName evidence="1">IMP synthase</fullName>
        </alternativeName>
        <alternativeName>
            <fullName evidence="1">Inosinicase</fullName>
        </alternativeName>
    </domain>
</protein>
<evidence type="ECO:0000255" key="1">
    <source>
        <dbReference type="HAMAP-Rule" id="MF_00139"/>
    </source>
</evidence>
<evidence type="ECO:0000255" key="2">
    <source>
        <dbReference type="PROSITE-ProRule" id="PRU01202"/>
    </source>
</evidence>
<comment type="catalytic activity">
    <reaction evidence="1">
        <text>(6R)-10-formyltetrahydrofolate + 5-amino-1-(5-phospho-beta-D-ribosyl)imidazole-4-carboxamide = 5-formamido-1-(5-phospho-D-ribosyl)imidazole-4-carboxamide + (6S)-5,6,7,8-tetrahydrofolate</text>
        <dbReference type="Rhea" id="RHEA:22192"/>
        <dbReference type="ChEBI" id="CHEBI:57453"/>
        <dbReference type="ChEBI" id="CHEBI:58467"/>
        <dbReference type="ChEBI" id="CHEBI:58475"/>
        <dbReference type="ChEBI" id="CHEBI:195366"/>
        <dbReference type="EC" id="2.1.2.3"/>
    </reaction>
</comment>
<comment type="catalytic activity">
    <reaction evidence="1">
        <text>IMP + H2O = 5-formamido-1-(5-phospho-D-ribosyl)imidazole-4-carboxamide</text>
        <dbReference type="Rhea" id="RHEA:18445"/>
        <dbReference type="ChEBI" id="CHEBI:15377"/>
        <dbReference type="ChEBI" id="CHEBI:58053"/>
        <dbReference type="ChEBI" id="CHEBI:58467"/>
        <dbReference type="EC" id="3.5.4.10"/>
    </reaction>
</comment>
<comment type="pathway">
    <text evidence="1">Purine metabolism; IMP biosynthesis via de novo pathway; 5-formamido-1-(5-phospho-D-ribosyl)imidazole-4-carboxamide from 5-amino-1-(5-phospho-D-ribosyl)imidazole-4-carboxamide (10-formyl THF route): step 1/1.</text>
</comment>
<comment type="pathway">
    <text evidence="1">Purine metabolism; IMP biosynthesis via de novo pathway; IMP from 5-formamido-1-(5-phospho-D-ribosyl)imidazole-4-carboxamide: step 1/1.</text>
</comment>
<comment type="domain">
    <text evidence="1">The IMP cyclohydrolase activity resides in the N-terminal region.</text>
</comment>
<comment type="similarity">
    <text evidence="1">Belongs to the PurH family.</text>
</comment>